<sequence length="397" mass="42315">MSPLLPSFPFAVLALADGSIFHGFSIGAPGETTGEVVFNTALTGYQEIITDPSYCSQIVTLTYPHIGNVGVNAQDAESDRIHAAGLVIKDLPKRVSNFRSEAPLDAYLTEAGVVGIAGIDTRKLTRILRDKGAQSGAIVAGKAGDDYETLGKKALELVKAFPGMAGLDLAKVVTTKKPYEWREGEWDLHGPNGTPAYRTLDTSKPTYKVVAYDFGVKRNILRMLTERGCELTVVPAQTSAAEVLAMQPDGVFLSNGPGDPEPCDYAIAAAKEIIEAGVPTFGICLGHQIMGLAAGAKTLKMKFGHHGANHPVKDLDTGRVAITSQNHGFAVDASTLPANVRVTHVSLFDGSLQGLAWKDKPAICFQGHPEASPGPHDVSYLFDRFMELMNAAKKEGK</sequence>
<proteinExistence type="inferred from homology"/>
<name>CARA_POLAQ</name>
<feature type="chain" id="PRO_1000138876" description="Carbamoyl phosphate synthase small chain">
    <location>
        <begin position="1"/>
        <end position="397"/>
    </location>
</feature>
<feature type="domain" description="Glutamine amidotransferase type-1" evidence="1">
    <location>
        <begin position="208"/>
        <end position="395"/>
    </location>
</feature>
<feature type="region of interest" description="CPSase" evidence="1">
    <location>
        <begin position="1"/>
        <end position="204"/>
    </location>
</feature>
<feature type="active site" description="Nucleophile" evidence="1">
    <location>
        <position position="284"/>
    </location>
</feature>
<feature type="active site" evidence="1">
    <location>
        <position position="368"/>
    </location>
</feature>
<feature type="active site" evidence="1">
    <location>
        <position position="370"/>
    </location>
</feature>
<feature type="binding site" evidence="1">
    <location>
        <position position="53"/>
    </location>
    <ligand>
        <name>L-glutamine</name>
        <dbReference type="ChEBI" id="CHEBI:58359"/>
    </ligand>
</feature>
<feature type="binding site" evidence="1">
    <location>
        <position position="256"/>
    </location>
    <ligand>
        <name>L-glutamine</name>
        <dbReference type="ChEBI" id="CHEBI:58359"/>
    </ligand>
</feature>
<feature type="binding site" evidence="1">
    <location>
        <position position="258"/>
    </location>
    <ligand>
        <name>L-glutamine</name>
        <dbReference type="ChEBI" id="CHEBI:58359"/>
    </ligand>
</feature>
<feature type="binding site" evidence="1">
    <location>
        <position position="285"/>
    </location>
    <ligand>
        <name>L-glutamine</name>
        <dbReference type="ChEBI" id="CHEBI:58359"/>
    </ligand>
</feature>
<feature type="binding site" evidence="1">
    <location>
        <position position="288"/>
    </location>
    <ligand>
        <name>L-glutamine</name>
        <dbReference type="ChEBI" id="CHEBI:58359"/>
    </ligand>
</feature>
<feature type="binding site" evidence="1">
    <location>
        <position position="326"/>
    </location>
    <ligand>
        <name>L-glutamine</name>
        <dbReference type="ChEBI" id="CHEBI:58359"/>
    </ligand>
</feature>
<feature type="binding site" evidence="1">
    <location>
        <position position="328"/>
    </location>
    <ligand>
        <name>L-glutamine</name>
        <dbReference type="ChEBI" id="CHEBI:58359"/>
    </ligand>
</feature>
<feature type="binding site" evidence="1">
    <location>
        <position position="329"/>
    </location>
    <ligand>
        <name>L-glutamine</name>
        <dbReference type="ChEBI" id="CHEBI:58359"/>
    </ligand>
</feature>
<comment type="function">
    <text evidence="1">Small subunit of the glutamine-dependent carbamoyl phosphate synthetase (CPSase). CPSase catalyzes the formation of carbamoyl phosphate from the ammonia moiety of glutamine, carbonate, and phosphate donated by ATP, constituting the first step of 2 biosynthetic pathways, one leading to arginine and/or urea and the other to pyrimidine nucleotides. The small subunit (glutamine amidotransferase) binds and cleaves glutamine to supply the large subunit with the substrate ammonia.</text>
</comment>
<comment type="catalytic activity">
    <reaction evidence="1">
        <text>hydrogencarbonate + L-glutamine + 2 ATP + H2O = carbamoyl phosphate + L-glutamate + 2 ADP + phosphate + 2 H(+)</text>
        <dbReference type="Rhea" id="RHEA:18633"/>
        <dbReference type="ChEBI" id="CHEBI:15377"/>
        <dbReference type="ChEBI" id="CHEBI:15378"/>
        <dbReference type="ChEBI" id="CHEBI:17544"/>
        <dbReference type="ChEBI" id="CHEBI:29985"/>
        <dbReference type="ChEBI" id="CHEBI:30616"/>
        <dbReference type="ChEBI" id="CHEBI:43474"/>
        <dbReference type="ChEBI" id="CHEBI:58228"/>
        <dbReference type="ChEBI" id="CHEBI:58359"/>
        <dbReference type="ChEBI" id="CHEBI:456216"/>
        <dbReference type="EC" id="6.3.5.5"/>
    </reaction>
</comment>
<comment type="catalytic activity">
    <molecule>Carbamoyl phosphate synthase small chain</molecule>
    <reaction evidence="1">
        <text>L-glutamine + H2O = L-glutamate + NH4(+)</text>
        <dbReference type="Rhea" id="RHEA:15889"/>
        <dbReference type="ChEBI" id="CHEBI:15377"/>
        <dbReference type="ChEBI" id="CHEBI:28938"/>
        <dbReference type="ChEBI" id="CHEBI:29985"/>
        <dbReference type="ChEBI" id="CHEBI:58359"/>
    </reaction>
</comment>
<comment type="pathway">
    <text evidence="1">Amino-acid biosynthesis; L-arginine biosynthesis; carbamoyl phosphate from bicarbonate: step 1/1.</text>
</comment>
<comment type="pathway">
    <text evidence="1">Pyrimidine metabolism; UMP biosynthesis via de novo pathway; (S)-dihydroorotate from bicarbonate: step 1/3.</text>
</comment>
<comment type="subunit">
    <text evidence="1">Composed of two chains; the small (or glutamine) chain promotes the hydrolysis of glutamine to ammonia, which is used by the large (or ammonia) chain to synthesize carbamoyl phosphate. Tetramer of heterodimers (alpha,beta)4.</text>
</comment>
<comment type="similarity">
    <text evidence="1">Belongs to the CarA family.</text>
</comment>
<dbReference type="EC" id="6.3.5.5" evidence="1"/>
<dbReference type="EMBL" id="CP000655">
    <property type="protein sequence ID" value="ABP34235.1"/>
    <property type="molecule type" value="Genomic_DNA"/>
</dbReference>
<dbReference type="SMR" id="A4SXM1"/>
<dbReference type="KEGG" id="pnu:Pnuc_1019"/>
<dbReference type="eggNOG" id="COG0505">
    <property type="taxonomic scope" value="Bacteria"/>
</dbReference>
<dbReference type="HOGENOM" id="CLU_035901_2_1_4"/>
<dbReference type="UniPathway" id="UPA00068">
    <property type="reaction ID" value="UER00171"/>
</dbReference>
<dbReference type="UniPathway" id="UPA00070">
    <property type="reaction ID" value="UER00115"/>
</dbReference>
<dbReference type="Proteomes" id="UP000000231">
    <property type="component" value="Chromosome"/>
</dbReference>
<dbReference type="GO" id="GO:0005524">
    <property type="term" value="F:ATP binding"/>
    <property type="evidence" value="ECO:0007669"/>
    <property type="project" value="UniProtKB-UniRule"/>
</dbReference>
<dbReference type="GO" id="GO:0004088">
    <property type="term" value="F:carbamoyl-phosphate synthase (glutamine-hydrolyzing) activity"/>
    <property type="evidence" value="ECO:0007669"/>
    <property type="project" value="UniProtKB-UniRule"/>
</dbReference>
<dbReference type="GO" id="GO:0004359">
    <property type="term" value="F:glutaminase activity"/>
    <property type="evidence" value="ECO:0007669"/>
    <property type="project" value="RHEA"/>
</dbReference>
<dbReference type="GO" id="GO:0006207">
    <property type="term" value="P:'de novo' pyrimidine nucleobase biosynthetic process"/>
    <property type="evidence" value="ECO:0007669"/>
    <property type="project" value="InterPro"/>
</dbReference>
<dbReference type="GO" id="GO:0044205">
    <property type="term" value="P:'de novo' UMP biosynthetic process"/>
    <property type="evidence" value="ECO:0007669"/>
    <property type="project" value="UniProtKB-UniRule"/>
</dbReference>
<dbReference type="GO" id="GO:0006541">
    <property type="term" value="P:glutamine metabolic process"/>
    <property type="evidence" value="ECO:0007669"/>
    <property type="project" value="InterPro"/>
</dbReference>
<dbReference type="GO" id="GO:0006526">
    <property type="term" value="P:L-arginine biosynthetic process"/>
    <property type="evidence" value="ECO:0007669"/>
    <property type="project" value="UniProtKB-UniRule"/>
</dbReference>
<dbReference type="CDD" id="cd01744">
    <property type="entry name" value="GATase1_CPSase"/>
    <property type="match status" value="1"/>
</dbReference>
<dbReference type="FunFam" id="3.40.50.880:FF:000011">
    <property type="entry name" value="Carbamoyl-phosphate synthase small chain"/>
    <property type="match status" value="1"/>
</dbReference>
<dbReference type="FunFam" id="3.50.30.20:FF:000001">
    <property type="entry name" value="Carbamoyl-phosphate synthase small chain"/>
    <property type="match status" value="1"/>
</dbReference>
<dbReference type="Gene3D" id="3.40.50.880">
    <property type="match status" value="1"/>
</dbReference>
<dbReference type="Gene3D" id="3.50.30.20">
    <property type="entry name" value="Carbamoyl-phosphate synthase small subunit, N-terminal domain"/>
    <property type="match status" value="1"/>
</dbReference>
<dbReference type="HAMAP" id="MF_01209">
    <property type="entry name" value="CPSase_S_chain"/>
    <property type="match status" value="1"/>
</dbReference>
<dbReference type="InterPro" id="IPR050472">
    <property type="entry name" value="Anth_synth/Amidotransfase"/>
</dbReference>
<dbReference type="InterPro" id="IPR006274">
    <property type="entry name" value="CarbamoylP_synth_ssu"/>
</dbReference>
<dbReference type="InterPro" id="IPR002474">
    <property type="entry name" value="CarbamoylP_synth_ssu_N"/>
</dbReference>
<dbReference type="InterPro" id="IPR036480">
    <property type="entry name" value="CarbP_synth_ssu_N_sf"/>
</dbReference>
<dbReference type="InterPro" id="IPR029062">
    <property type="entry name" value="Class_I_gatase-like"/>
</dbReference>
<dbReference type="InterPro" id="IPR035686">
    <property type="entry name" value="CPSase_GATase1"/>
</dbReference>
<dbReference type="InterPro" id="IPR017926">
    <property type="entry name" value="GATASE"/>
</dbReference>
<dbReference type="NCBIfam" id="TIGR01368">
    <property type="entry name" value="CPSaseIIsmall"/>
    <property type="match status" value="1"/>
</dbReference>
<dbReference type="NCBIfam" id="NF009475">
    <property type="entry name" value="PRK12838.1"/>
    <property type="match status" value="1"/>
</dbReference>
<dbReference type="PANTHER" id="PTHR43418:SF7">
    <property type="entry name" value="CARBAMOYL-PHOSPHATE SYNTHASE SMALL CHAIN"/>
    <property type="match status" value="1"/>
</dbReference>
<dbReference type="PANTHER" id="PTHR43418">
    <property type="entry name" value="MULTIFUNCTIONAL TRYPTOPHAN BIOSYNTHESIS PROTEIN-RELATED"/>
    <property type="match status" value="1"/>
</dbReference>
<dbReference type="Pfam" id="PF00988">
    <property type="entry name" value="CPSase_sm_chain"/>
    <property type="match status" value="1"/>
</dbReference>
<dbReference type="Pfam" id="PF00117">
    <property type="entry name" value="GATase"/>
    <property type="match status" value="1"/>
</dbReference>
<dbReference type="PRINTS" id="PR00099">
    <property type="entry name" value="CPSGATASE"/>
</dbReference>
<dbReference type="PRINTS" id="PR00096">
    <property type="entry name" value="GATASE"/>
</dbReference>
<dbReference type="SMART" id="SM01097">
    <property type="entry name" value="CPSase_sm_chain"/>
    <property type="match status" value="1"/>
</dbReference>
<dbReference type="SUPFAM" id="SSF52021">
    <property type="entry name" value="Carbamoyl phosphate synthetase, small subunit N-terminal domain"/>
    <property type="match status" value="1"/>
</dbReference>
<dbReference type="SUPFAM" id="SSF52317">
    <property type="entry name" value="Class I glutamine amidotransferase-like"/>
    <property type="match status" value="1"/>
</dbReference>
<dbReference type="PROSITE" id="PS51273">
    <property type="entry name" value="GATASE_TYPE_1"/>
    <property type="match status" value="1"/>
</dbReference>
<organism>
    <name type="scientific">Polynucleobacter asymbioticus (strain DSM 18221 / CIP 109841 / QLW-P1DMWA-1)</name>
    <name type="common">Polynucleobacter necessarius subsp. asymbioticus</name>
    <dbReference type="NCBI Taxonomy" id="312153"/>
    <lineage>
        <taxon>Bacteria</taxon>
        <taxon>Pseudomonadati</taxon>
        <taxon>Pseudomonadota</taxon>
        <taxon>Betaproteobacteria</taxon>
        <taxon>Burkholderiales</taxon>
        <taxon>Burkholderiaceae</taxon>
        <taxon>Polynucleobacter</taxon>
    </lineage>
</organism>
<evidence type="ECO:0000255" key="1">
    <source>
        <dbReference type="HAMAP-Rule" id="MF_01209"/>
    </source>
</evidence>
<keyword id="KW-0028">Amino-acid biosynthesis</keyword>
<keyword id="KW-0055">Arginine biosynthesis</keyword>
<keyword id="KW-0067">ATP-binding</keyword>
<keyword id="KW-0315">Glutamine amidotransferase</keyword>
<keyword id="KW-0436">Ligase</keyword>
<keyword id="KW-0547">Nucleotide-binding</keyword>
<keyword id="KW-0665">Pyrimidine biosynthesis</keyword>
<keyword id="KW-1185">Reference proteome</keyword>
<protein>
    <recommendedName>
        <fullName evidence="1">Carbamoyl phosphate synthase small chain</fullName>
        <ecNumber evidence="1">6.3.5.5</ecNumber>
    </recommendedName>
    <alternativeName>
        <fullName evidence="1">Carbamoyl phosphate synthetase glutamine chain</fullName>
    </alternativeName>
</protein>
<accession>A4SXM1</accession>
<reference key="1">
    <citation type="journal article" date="2012" name="Stand. Genomic Sci.">
        <title>Complete genome sequence of Polynucleobacter necessarius subsp. asymbioticus type strain (QLW-P1DMWA-1(T)).</title>
        <authorList>
            <person name="Meincke L."/>
            <person name="Copeland A."/>
            <person name="Lapidus A."/>
            <person name="Lucas S."/>
            <person name="Berry K.W."/>
            <person name="Del Rio T.G."/>
            <person name="Hammon N."/>
            <person name="Dalin E."/>
            <person name="Tice H."/>
            <person name="Pitluck S."/>
            <person name="Richardson P."/>
            <person name="Bruce D."/>
            <person name="Goodwin L."/>
            <person name="Han C."/>
            <person name="Tapia R."/>
            <person name="Detter J.C."/>
            <person name="Schmutz J."/>
            <person name="Brettin T."/>
            <person name="Larimer F."/>
            <person name="Land M."/>
            <person name="Hauser L."/>
            <person name="Kyrpides N.C."/>
            <person name="Ivanova N."/>
            <person name="Goker M."/>
            <person name="Woyke T."/>
            <person name="Wu Q.L."/>
            <person name="Pockl M."/>
            <person name="Hahn M.W."/>
            <person name="Klenk H.P."/>
        </authorList>
    </citation>
    <scope>NUCLEOTIDE SEQUENCE [LARGE SCALE GENOMIC DNA]</scope>
    <source>
        <strain>DSM 18221 / CIP 109841 / QLW-P1DMWA-1</strain>
    </source>
</reference>
<gene>
    <name evidence="1" type="primary">carA</name>
    <name type="ordered locus">Pnuc_1019</name>
</gene>